<accession>A6ZNW6</accession>
<organism>
    <name type="scientific">Saccharomyces cerevisiae (strain YJM789)</name>
    <name type="common">Baker's yeast</name>
    <dbReference type="NCBI Taxonomy" id="307796"/>
    <lineage>
        <taxon>Eukaryota</taxon>
        <taxon>Fungi</taxon>
        <taxon>Dikarya</taxon>
        <taxon>Ascomycota</taxon>
        <taxon>Saccharomycotina</taxon>
        <taxon>Saccharomycetes</taxon>
        <taxon>Saccharomycetales</taxon>
        <taxon>Saccharomycetaceae</taxon>
        <taxon>Saccharomyces</taxon>
    </lineage>
</organism>
<reference key="1">
    <citation type="journal article" date="2007" name="Proc. Natl. Acad. Sci. U.S.A.">
        <title>Genome sequencing and comparative analysis of Saccharomyces cerevisiae strain YJM789.</title>
        <authorList>
            <person name="Wei W."/>
            <person name="McCusker J.H."/>
            <person name="Hyman R.W."/>
            <person name="Jones T."/>
            <person name="Ning Y."/>
            <person name="Cao Z."/>
            <person name="Gu Z."/>
            <person name="Bruno D."/>
            <person name="Miranda M."/>
            <person name="Nguyen M."/>
            <person name="Wilhelmy J."/>
            <person name="Komp C."/>
            <person name="Tamse R."/>
            <person name="Wang X."/>
            <person name="Jia P."/>
            <person name="Luedi P."/>
            <person name="Oefner P.J."/>
            <person name="David L."/>
            <person name="Dietrich F.S."/>
            <person name="Li Y."/>
            <person name="Davis R.W."/>
            <person name="Steinmetz L.M."/>
        </authorList>
    </citation>
    <scope>NUCLEOTIDE SEQUENCE [LARGE SCALE GENOMIC DNA]</scope>
    <source>
        <strain>YJM789</strain>
    </source>
</reference>
<name>RTC5_YEAS7</name>
<dbReference type="EMBL" id="AAFW02000030">
    <property type="protein sequence ID" value="EDN63981.1"/>
    <property type="molecule type" value="Genomic_DNA"/>
</dbReference>
<dbReference type="SMR" id="A6ZNW6"/>
<dbReference type="HOGENOM" id="CLU_011918_1_0_1"/>
<dbReference type="OrthoDB" id="32658at4893"/>
<dbReference type="Proteomes" id="UP000007060">
    <property type="component" value="Unassembled WGS sequence"/>
</dbReference>
<dbReference type="GO" id="GO:0005737">
    <property type="term" value="C:cytoplasm"/>
    <property type="evidence" value="ECO:0007669"/>
    <property type="project" value="UniProtKB-SubCell"/>
</dbReference>
<dbReference type="GO" id="GO:0005634">
    <property type="term" value="C:nucleus"/>
    <property type="evidence" value="ECO:0007669"/>
    <property type="project" value="TreeGrafter"/>
</dbReference>
<dbReference type="GO" id="GO:0006979">
    <property type="term" value="P:response to oxidative stress"/>
    <property type="evidence" value="ECO:0007669"/>
    <property type="project" value="TreeGrafter"/>
</dbReference>
<dbReference type="InterPro" id="IPR006571">
    <property type="entry name" value="TLDc_dom"/>
</dbReference>
<dbReference type="PANTHER" id="PTHR23354">
    <property type="entry name" value="NUCLEOLAR PROTEIN 7/ESTROGEN RECEPTOR COACTIVATOR-RELATED"/>
    <property type="match status" value="1"/>
</dbReference>
<dbReference type="PANTHER" id="PTHR23354:SF130">
    <property type="entry name" value="RESTRICTION OF TELOMERE CAPPING PROTEIN 5"/>
    <property type="match status" value="1"/>
</dbReference>
<dbReference type="Pfam" id="PF07534">
    <property type="entry name" value="TLD"/>
    <property type="match status" value="1"/>
</dbReference>
<dbReference type="SMART" id="SM00584">
    <property type="entry name" value="TLDc"/>
    <property type="match status" value="1"/>
</dbReference>
<dbReference type="PROSITE" id="PS51886">
    <property type="entry name" value="TLDC"/>
    <property type="match status" value="1"/>
</dbReference>
<proteinExistence type="inferred from homology"/>
<feature type="chain" id="PRO_0000408853" description="Restriction of telomere capping protein 5">
    <location>
        <begin position="1"/>
        <end position="567"/>
    </location>
</feature>
<feature type="domain" description="TLDc" evidence="2">
    <location>
        <begin position="289"/>
        <end position="515"/>
    </location>
</feature>
<protein>
    <recommendedName>
        <fullName>Restriction of telomere capping protein 5</fullName>
    </recommendedName>
</protein>
<evidence type="ECO:0000250" key="1"/>
<evidence type="ECO:0000255" key="2">
    <source>
        <dbReference type="PROSITE-ProRule" id="PRU01234"/>
    </source>
</evidence>
<evidence type="ECO:0000305" key="3"/>
<gene>
    <name type="primary">RTC5</name>
    <name type="ORF">SCY_5184</name>
</gene>
<keyword id="KW-0963">Cytoplasm</keyword>
<comment type="function">
    <text evidence="1">May be involved in a process influencing telomere capping.</text>
</comment>
<comment type="subcellular location">
    <subcellularLocation>
        <location evidence="1">Cytoplasm</location>
    </subcellularLocation>
</comment>
<comment type="similarity">
    <text evidence="3">Belongs to the RTC5 family.</text>
</comment>
<sequence length="567" mass="64295">MGQSSSISSSNEEGSSHSKKFTNSKDILAYFNNKAQQQVTIPELVSFKGNLQIEDLNTPISHKALCNSLYFPQNHAMIVGIVTNMLRVLSNFPLMKSSYEPITGYGLLKCILLLNRARCAKFLKTKSYDQLKLLFISLSLQKTDKEELSEESENDGDKELTIKQIITGFDDVDTEMLCIPADFMLQFLTWLLILTVDCPTTNSKLDNTETHDQWGNFKVSALNLLRTMNPDVVGDIESHSITFQQFSTAIRTVMPNLLKPLENLMEHFFYLQHDLVDHDTNLSSIQDSKVMTPALLAQLSTGLPKELFIHKLQSLYIGRKSGFSMRSLQAKVFKWMAPSILVVSGMRITNSEEYAAEKNPRYRHFLEEFPKLKESDQMMDASHLNKRKTTFAVYIDDPWKVTNKDYFGDLNTRIIEISPRQDIYKVNQKGTIYFNTIGGGIGIGDKQPLIKPASKRYIPGNVSLTFDSTLEFAVFRNTGYGGSLDPGLLSMERKEENSPYELHFLIQDVEVWGCGGEKELEEQIKQLEWEEAESKRRQQINLRSLGEDRALLEMAGLVGQHQGGGSM</sequence>